<keyword id="KW-0963">Cytoplasm</keyword>
<keyword id="KW-0255">Endonuclease</keyword>
<keyword id="KW-0378">Hydrolase</keyword>
<keyword id="KW-0464">Manganese</keyword>
<keyword id="KW-0479">Metal-binding</keyword>
<keyword id="KW-0540">Nuclease</keyword>
<keyword id="KW-1185">Reference proteome</keyword>
<gene>
    <name evidence="1" type="primary">rnhB</name>
    <name type="ordered locus">BRADO2017</name>
</gene>
<feature type="chain" id="PRO_0000334867" description="Ribonuclease HII">
    <location>
        <begin position="1"/>
        <end position="277"/>
    </location>
</feature>
<feature type="domain" description="RNase H type-2" evidence="2">
    <location>
        <begin position="64"/>
        <end position="252"/>
    </location>
</feature>
<feature type="region of interest" description="Disordered" evidence="3">
    <location>
        <begin position="1"/>
        <end position="32"/>
    </location>
</feature>
<feature type="compositionally biased region" description="Low complexity" evidence="3">
    <location>
        <begin position="20"/>
        <end position="32"/>
    </location>
</feature>
<feature type="binding site" evidence="1">
    <location>
        <position position="70"/>
    </location>
    <ligand>
        <name>a divalent metal cation</name>
        <dbReference type="ChEBI" id="CHEBI:60240"/>
    </ligand>
</feature>
<feature type="binding site" evidence="1">
    <location>
        <position position="71"/>
    </location>
    <ligand>
        <name>a divalent metal cation</name>
        <dbReference type="ChEBI" id="CHEBI:60240"/>
    </ligand>
</feature>
<feature type="binding site" evidence="1">
    <location>
        <position position="161"/>
    </location>
    <ligand>
        <name>a divalent metal cation</name>
        <dbReference type="ChEBI" id="CHEBI:60240"/>
    </ligand>
</feature>
<comment type="function">
    <text evidence="1">Endonuclease that specifically degrades the RNA of RNA-DNA hybrids.</text>
</comment>
<comment type="catalytic activity">
    <reaction evidence="1">
        <text>Endonucleolytic cleavage to 5'-phosphomonoester.</text>
        <dbReference type="EC" id="3.1.26.4"/>
    </reaction>
</comment>
<comment type="cofactor">
    <cofactor evidence="1">
        <name>Mn(2+)</name>
        <dbReference type="ChEBI" id="CHEBI:29035"/>
    </cofactor>
    <cofactor evidence="1">
        <name>Mg(2+)</name>
        <dbReference type="ChEBI" id="CHEBI:18420"/>
    </cofactor>
    <text evidence="1">Manganese or magnesium. Binds 1 divalent metal ion per monomer in the absence of substrate. May bind a second metal ion after substrate binding.</text>
</comment>
<comment type="subcellular location">
    <subcellularLocation>
        <location evidence="1">Cytoplasm</location>
    </subcellularLocation>
</comment>
<comment type="similarity">
    <text evidence="1">Belongs to the RNase HII family.</text>
</comment>
<comment type="sequence caution" evidence="4">
    <conflict type="erroneous initiation">
        <sequence resource="EMBL-CDS" id="CAL75874"/>
    </conflict>
</comment>
<name>RNH2_BRASO</name>
<proteinExistence type="inferred from homology"/>
<accession>A4YPP8</accession>
<dbReference type="EC" id="3.1.26.4" evidence="1"/>
<dbReference type="EMBL" id="CU234118">
    <property type="protein sequence ID" value="CAL75874.1"/>
    <property type="status" value="ALT_INIT"/>
    <property type="molecule type" value="Genomic_DNA"/>
</dbReference>
<dbReference type="SMR" id="A4YPP8"/>
<dbReference type="STRING" id="114615.BRADO2017"/>
<dbReference type="KEGG" id="bra:BRADO2017"/>
<dbReference type="eggNOG" id="COG0164">
    <property type="taxonomic scope" value="Bacteria"/>
</dbReference>
<dbReference type="HOGENOM" id="CLU_036532_2_2_5"/>
<dbReference type="Proteomes" id="UP000001994">
    <property type="component" value="Chromosome"/>
</dbReference>
<dbReference type="GO" id="GO:0005737">
    <property type="term" value="C:cytoplasm"/>
    <property type="evidence" value="ECO:0007669"/>
    <property type="project" value="UniProtKB-SubCell"/>
</dbReference>
<dbReference type="GO" id="GO:0032299">
    <property type="term" value="C:ribonuclease H2 complex"/>
    <property type="evidence" value="ECO:0007669"/>
    <property type="project" value="TreeGrafter"/>
</dbReference>
<dbReference type="GO" id="GO:0030145">
    <property type="term" value="F:manganese ion binding"/>
    <property type="evidence" value="ECO:0007669"/>
    <property type="project" value="UniProtKB-UniRule"/>
</dbReference>
<dbReference type="GO" id="GO:0003723">
    <property type="term" value="F:RNA binding"/>
    <property type="evidence" value="ECO:0007669"/>
    <property type="project" value="InterPro"/>
</dbReference>
<dbReference type="GO" id="GO:0004523">
    <property type="term" value="F:RNA-DNA hybrid ribonuclease activity"/>
    <property type="evidence" value="ECO:0007669"/>
    <property type="project" value="UniProtKB-UniRule"/>
</dbReference>
<dbReference type="GO" id="GO:0043137">
    <property type="term" value="P:DNA replication, removal of RNA primer"/>
    <property type="evidence" value="ECO:0007669"/>
    <property type="project" value="TreeGrafter"/>
</dbReference>
<dbReference type="GO" id="GO:0006298">
    <property type="term" value="P:mismatch repair"/>
    <property type="evidence" value="ECO:0007669"/>
    <property type="project" value="TreeGrafter"/>
</dbReference>
<dbReference type="CDD" id="cd07182">
    <property type="entry name" value="RNase_HII_bacteria_HII_like"/>
    <property type="match status" value="1"/>
</dbReference>
<dbReference type="FunFam" id="3.30.420.10:FF:000078">
    <property type="entry name" value="Ribonuclease HII"/>
    <property type="match status" value="1"/>
</dbReference>
<dbReference type="Gene3D" id="3.30.420.10">
    <property type="entry name" value="Ribonuclease H-like superfamily/Ribonuclease H"/>
    <property type="match status" value="1"/>
</dbReference>
<dbReference type="HAMAP" id="MF_00052_B">
    <property type="entry name" value="RNase_HII_B"/>
    <property type="match status" value="1"/>
</dbReference>
<dbReference type="InterPro" id="IPR022898">
    <property type="entry name" value="RNase_HII"/>
</dbReference>
<dbReference type="InterPro" id="IPR001352">
    <property type="entry name" value="RNase_HII/HIII"/>
</dbReference>
<dbReference type="InterPro" id="IPR024567">
    <property type="entry name" value="RNase_HII/HIII_dom"/>
</dbReference>
<dbReference type="InterPro" id="IPR012337">
    <property type="entry name" value="RNaseH-like_sf"/>
</dbReference>
<dbReference type="InterPro" id="IPR036397">
    <property type="entry name" value="RNaseH_sf"/>
</dbReference>
<dbReference type="NCBIfam" id="NF000595">
    <property type="entry name" value="PRK00015.1-3"/>
    <property type="match status" value="1"/>
</dbReference>
<dbReference type="PANTHER" id="PTHR10954">
    <property type="entry name" value="RIBONUCLEASE H2 SUBUNIT A"/>
    <property type="match status" value="1"/>
</dbReference>
<dbReference type="PANTHER" id="PTHR10954:SF18">
    <property type="entry name" value="RIBONUCLEASE HII"/>
    <property type="match status" value="1"/>
</dbReference>
<dbReference type="Pfam" id="PF01351">
    <property type="entry name" value="RNase_HII"/>
    <property type="match status" value="1"/>
</dbReference>
<dbReference type="SUPFAM" id="SSF53098">
    <property type="entry name" value="Ribonuclease H-like"/>
    <property type="match status" value="1"/>
</dbReference>
<dbReference type="PROSITE" id="PS51975">
    <property type="entry name" value="RNASE_H_2"/>
    <property type="match status" value="1"/>
</dbReference>
<protein>
    <recommendedName>
        <fullName evidence="1">Ribonuclease HII</fullName>
        <shortName evidence="1">RNase HII</shortName>
        <ecNumber evidence="1">3.1.26.4</ecNumber>
    </recommendedName>
</protein>
<organism>
    <name type="scientific">Bradyrhizobium sp. (strain ORS 278)</name>
    <dbReference type="NCBI Taxonomy" id="114615"/>
    <lineage>
        <taxon>Bacteria</taxon>
        <taxon>Pseudomonadati</taxon>
        <taxon>Pseudomonadota</taxon>
        <taxon>Alphaproteobacteria</taxon>
        <taxon>Hyphomicrobiales</taxon>
        <taxon>Nitrobacteraceae</taxon>
        <taxon>Bradyrhizobium</taxon>
    </lineage>
</organism>
<sequence length="277" mass="29418">MIRNQANKPGRAKAATAARKSPLTKSAAKPAAASGAGAKLGKGVIAVALPSFRRERALLKQGIWPVAGCDEAGRGPLAGPVVAAAVILDPNRIPKGLDDSKRLSAEQREALFDKICKTSAFAVAYASPTRIDRDNILRASLWALSRAVRALPEAPKHVFVDGRDRIDVDCNCEAVIGGDGLVMSIAAASIVAKVTRDRLMCALAQDCPGYGFEQHKGYAVPEHLAALDRLGPSVHHRSLFAPVVAARRKHQPWTDVPEPDLFAEVTVVTSTEISLEA</sequence>
<evidence type="ECO:0000255" key="1">
    <source>
        <dbReference type="HAMAP-Rule" id="MF_00052"/>
    </source>
</evidence>
<evidence type="ECO:0000255" key="2">
    <source>
        <dbReference type="PROSITE-ProRule" id="PRU01319"/>
    </source>
</evidence>
<evidence type="ECO:0000256" key="3">
    <source>
        <dbReference type="SAM" id="MobiDB-lite"/>
    </source>
</evidence>
<evidence type="ECO:0000305" key="4"/>
<reference key="1">
    <citation type="journal article" date="2007" name="Science">
        <title>Legumes symbioses: absence of nod genes in photosynthetic bradyrhizobia.</title>
        <authorList>
            <person name="Giraud E."/>
            <person name="Moulin L."/>
            <person name="Vallenet D."/>
            <person name="Barbe V."/>
            <person name="Cytryn E."/>
            <person name="Avarre J.-C."/>
            <person name="Jaubert M."/>
            <person name="Simon D."/>
            <person name="Cartieaux F."/>
            <person name="Prin Y."/>
            <person name="Bena G."/>
            <person name="Hannibal L."/>
            <person name="Fardoux J."/>
            <person name="Kojadinovic M."/>
            <person name="Vuillet L."/>
            <person name="Lajus A."/>
            <person name="Cruveiller S."/>
            <person name="Rouy Z."/>
            <person name="Mangenot S."/>
            <person name="Segurens B."/>
            <person name="Dossat C."/>
            <person name="Franck W.L."/>
            <person name="Chang W.-S."/>
            <person name="Saunders E."/>
            <person name="Bruce D."/>
            <person name="Richardson P."/>
            <person name="Normand P."/>
            <person name="Dreyfus B."/>
            <person name="Pignol D."/>
            <person name="Stacey G."/>
            <person name="Emerich D."/>
            <person name="Vermeglio A."/>
            <person name="Medigue C."/>
            <person name="Sadowsky M."/>
        </authorList>
    </citation>
    <scope>NUCLEOTIDE SEQUENCE [LARGE SCALE GENOMIC DNA]</scope>
    <source>
        <strain>ORS 278</strain>
    </source>
</reference>